<evidence type="ECO:0000255" key="1">
    <source>
        <dbReference type="HAMAP-Rule" id="MF_00081"/>
    </source>
</evidence>
<gene>
    <name evidence="1" type="primary">hrcA</name>
    <name type="ordered locus">SACOL1639</name>
</gene>
<sequence>MITDRQLSILNAIVEDYVDFGQPVGSKTLIERHNLNVSPATIRNEMKQLEDLNYIEKTHSSSGRSPSQLGFRYYVNRLLEQTSHQKTNKLRRLNQLLVENQYDVSSALTYFADELSNISQYTTLVVHPNHKQDIINNVHLIRANPNLVIMVIVFSSGHVEHVHLASDIPFNNDKLNTISNFVTNKLTEFNQNLQDDIVSFVQSEQEEIFINKLLNTMNNHISNQSNSIYMGGKVKLIDALNESNVSSIQPILQYIESNRIAELLQDISSPNINVKIGNEIDDSLSDISIVTSQYHFDETLKGQIAVIGPTAMHYQNVIQLLNRIW</sequence>
<organism>
    <name type="scientific">Staphylococcus aureus (strain COL)</name>
    <dbReference type="NCBI Taxonomy" id="93062"/>
    <lineage>
        <taxon>Bacteria</taxon>
        <taxon>Bacillati</taxon>
        <taxon>Bacillota</taxon>
        <taxon>Bacilli</taxon>
        <taxon>Bacillales</taxon>
        <taxon>Staphylococcaceae</taxon>
        <taxon>Staphylococcus</taxon>
    </lineage>
</organism>
<comment type="function">
    <text evidence="1">Negative regulator of class I heat shock genes (grpE-dnaK-dnaJ and groELS operons). Prevents heat-shock induction of these operons.</text>
</comment>
<comment type="similarity">
    <text evidence="1">Belongs to the HrcA family.</text>
</comment>
<protein>
    <recommendedName>
        <fullName evidence="1">Heat-inducible transcription repressor HrcA</fullName>
    </recommendedName>
</protein>
<accession>Q5HFH8</accession>
<reference key="1">
    <citation type="journal article" date="2005" name="J. Bacteriol.">
        <title>Insights on evolution of virulence and resistance from the complete genome analysis of an early methicillin-resistant Staphylococcus aureus strain and a biofilm-producing methicillin-resistant Staphylococcus epidermidis strain.</title>
        <authorList>
            <person name="Gill S.R."/>
            <person name="Fouts D.E."/>
            <person name="Archer G.L."/>
            <person name="Mongodin E.F."/>
            <person name="DeBoy R.T."/>
            <person name="Ravel J."/>
            <person name="Paulsen I.T."/>
            <person name="Kolonay J.F."/>
            <person name="Brinkac L.M."/>
            <person name="Beanan M.J."/>
            <person name="Dodson R.J."/>
            <person name="Daugherty S.C."/>
            <person name="Madupu R."/>
            <person name="Angiuoli S.V."/>
            <person name="Durkin A.S."/>
            <person name="Haft D.H."/>
            <person name="Vamathevan J.J."/>
            <person name="Khouri H."/>
            <person name="Utterback T.R."/>
            <person name="Lee C."/>
            <person name="Dimitrov G."/>
            <person name="Jiang L."/>
            <person name="Qin H."/>
            <person name="Weidman J."/>
            <person name="Tran K."/>
            <person name="Kang K.H."/>
            <person name="Hance I.R."/>
            <person name="Nelson K.E."/>
            <person name="Fraser C.M."/>
        </authorList>
    </citation>
    <scope>NUCLEOTIDE SEQUENCE [LARGE SCALE GENOMIC DNA]</scope>
    <source>
        <strain>COL</strain>
    </source>
</reference>
<dbReference type="EMBL" id="CP000046">
    <property type="protein sequence ID" value="AAW38255.1"/>
    <property type="molecule type" value="Genomic_DNA"/>
</dbReference>
<dbReference type="RefSeq" id="WP_000627140.1">
    <property type="nucleotide sequence ID" value="NZ_JBGOFO010000003.1"/>
</dbReference>
<dbReference type="SMR" id="Q5HFH8"/>
<dbReference type="KEGG" id="sac:SACOL1639"/>
<dbReference type="HOGENOM" id="CLU_050019_1_0_9"/>
<dbReference type="Proteomes" id="UP000000530">
    <property type="component" value="Chromosome"/>
</dbReference>
<dbReference type="GO" id="GO:0003677">
    <property type="term" value="F:DNA binding"/>
    <property type="evidence" value="ECO:0007669"/>
    <property type="project" value="InterPro"/>
</dbReference>
<dbReference type="GO" id="GO:0045892">
    <property type="term" value="P:negative regulation of DNA-templated transcription"/>
    <property type="evidence" value="ECO:0007669"/>
    <property type="project" value="UniProtKB-UniRule"/>
</dbReference>
<dbReference type="FunFam" id="1.10.10.10:FF:000049">
    <property type="entry name" value="Heat-inducible transcription repressor HrcA"/>
    <property type="match status" value="1"/>
</dbReference>
<dbReference type="Gene3D" id="3.30.450.40">
    <property type="match status" value="1"/>
</dbReference>
<dbReference type="Gene3D" id="3.30.390.60">
    <property type="entry name" value="Heat-inducible transcription repressor hrca homolog, domain 3"/>
    <property type="match status" value="1"/>
</dbReference>
<dbReference type="Gene3D" id="1.10.10.10">
    <property type="entry name" value="Winged helix-like DNA-binding domain superfamily/Winged helix DNA-binding domain"/>
    <property type="match status" value="1"/>
</dbReference>
<dbReference type="HAMAP" id="MF_00081">
    <property type="entry name" value="HrcA"/>
    <property type="match status" value="1"/>
</dbReference>
<dbReference type="InterPro" id="IPR029016">
    <property type="entry name" value="GAF-like_dom_sf"/>
</dbReference>
<dbReference type="InterPro" id="IPR002571">
    <property type="entry name" value="HrcA"/>
</dbReference>
<dbReference type="InterPro" id="IPR021153">
    <property type="entry name" value="HrcA_C"/>
</dbReference>
<dbReference type="InterPro" id="IPR036388">
    <property type="entry name" value="WH-like_DNA-bd_sf"/>
</dbReference>
<dbReference type="InterPro" id="IPR036390">
    <property type="entry name" value="WH_DNA-bd_sf"/>
</dbReference>
<dbReference type="InterPro" id="IPR023120">
    <property type="entry name" value="WHTH_transcript_rep_HrcA_IDD"/>
</dbReference>
<dbReference type="NCBIfam" id="TIGR00331">
    <property type="entry name" value="hrcA"/>
    <property type="match status" value="1"/>
</dbReference>
<dbReference type="PANTHER" id="PTHR34824">
    <property type="entry name" value="HEAT-INDUCIBLE TRANSCRIPTION REPRESSOR HRCA"/>
    <property type="match status" value="1"/>
</dbReference>
<dbReference type="PANTHER" id="PTHR34824:SF1">
    <property type="entry name" value="HEAT-INDUCIBLE TRANSCRIPTION REPRESSOR HRCA"/>
    <property type="match status" value="1"/>
</dbReference>
<dbReference type="Pfam" id="PF01628">
    <property type="entry name" value="HrcA"/>
    <property type="match status" value="1"/>
</dbReference>
<dbReference type="PIRSF" id="PIRSF005485">
    <property type="entry name" value="HrcA"/>
    <property type="match status" value="1"/>
</dbReference>
<dbReference type="SUPFAM" id="SSF55781">
    <property type="entry name" value="GAF domain-like"/>
    <property type="match status" value="1"/>
</dbReference>
<dbReference type="SUPFAM" id="SSF46785">
    <property type="entry name" value="Winged helix' DNA-binding domain"/>
    <property type="match status" value="1"/>
</dbReference>
<keyword id="KW-0678">Repressor</keyword>
<keyword id="KW-0346">Stress response</keyword>
<keyword id="KW-0804">Transcription</keyword>
<keyword id="KW-0805">Transcription regulation</keyword>
<name>HRCA_STAAC</name>
<feature type="chain" id="PRO_0000182525" description="Heat-inducible transcription repressor HrcA">
    <location>
        <begin position="1"/>
        <end position="325"/>
    </location>
</feature>
<proteinExistence type="inferred from homology"/>